<keyword id="KW-0963">Cytoplasm</keyword>
<keyword id="KW-0456">Lyase</keyword>
<keyword id="KW-0663">Pyridoxal phosphate</keyword>
<keyword id="KW-0808">Transferase</keyword>
<protein>
    <recommendedName>
        <fullName evidence="1">Cysteine desulfurase</fullName>
        <ecNumber evidence="1">2.8.1.7</ecNumber>
    </recommendedName>
    <alternativeName>
        <fullName evidence="1">Selenocysteine beta-lyase</fullName>
        <shortName evidence="1">SCL</shortName>
    </alternativeName>
    <alternativeName>
        <fullName evidence="1">Selenocysteine lyase</fullName>
        <ecNumber evidence="1">4.4.1.16</ecNumber>
    </alternativeName>
    <alternativeName>
        <fullName evidence="1">Selenocysteine reductase</fullName>
    </alternativeName>
</protein>
<dbReference type="EC" id="2.8.1.7" evidence="1"/>
<dbReference type="EC" id="4.4.1.16" evidence="1"/>
<dbReference type="EMBL" id="CP001396">
    <property type="protein sequence ID" value="ACR65514.1"/>
    <property type="molecule type" value="Genomic_DNA"/>
</dbReference>
<dbReference type="RefSeq" id="WP_000577988.1">
    <property type="nucleotide sequence ID" value="NC_012759.1"/>
</dbReference>
<dbReference type="SMR" id="C4ZYE2"/>
<dbReference type="KEGG" id="ebw:BWG_1494"/>
<dbReference type="HOGENOM" id="CLU_003433_2_5_6"/>
<dbReference type="UniPathway" id="UPA00266"/>
<dbReference type="GO" id="GO:0005737">
    <property type="term" value="C:cytoplasm"/>
    <property type="evidence" value="ECO:0007669"/>
    <property type="project" value="UniProtKB-SubCell"/>
</dbReference>
<dbReference type="GO" id="GO:0031071">
    <property type="term" value="F:cysteine desulfurase activity"/>
    <property type="evidence" value="ECO:0007669"/>
    <property type="project" value="UniProtKB-UniRule"/>
</dbReference>
<dbReference type="GO" id="GO:0030170">
    <property type="term" value="F:pyridoxal phosphate binding"/>
    <property type="evidence" value="ECO:0007669"/>
    <property type="project" value="InterPro"/>
</dbReference>
<dbReference type="GO" id="GO:0009000">
    <property type="term" value="F:selenocysteine lyase activity"/>
    <property type="evidence" value="ECO:0007669"/>
    <property type="project" value="UniProtKB-UniRule"/>
</dbReference>
<dbReference type="GO" id="GO:0006534">
    <property type="term" value="P:cysteine metabolic process"/>
    <property type="evidence" value="ECO:0007669"/>
    <property type="project" value="InterPro"/>
</dbReference>
<dbReference type="CDD" id="cd06453">
    <property type="entry name" value="SufS_like"/>
    <property type="match status" value="1"/>
</dbReference>
<dbReference type="FunFam" id="3.40.640.10:FF:000042">
    <property type="entry name" value="Cysteine desulfurase"/>
    <property type="match status" value="1"/>
</dbReference>
<dbReference type="Gene3D" id="3.90.1150.10">
    <property type="entry name" value="Aspartate Aminotransferase, domain 1"/>
    <property type="match status" value="1"/>
</dbReference>
<dbReference type="Gene3D" id="3.40.640.10">
    <property type="entry name" value="Type I PLP-dependent aspartate aminotransferase-like (Major domain)"/>
    <property type="match status" value="1"/>
</dbReference>
<dbReference type="HAMAP" id="MF_01831">
    <property type="entry name" value="SufS_aminotrans_5"/>
    <property type="match status" value="1"/>
</dbReference>
<dbReference type="InterPro" id="IPR000192">
    <property type="entry name" value="Aminotrans_V_dom"/>
</dbReference>
<dbReference type="InterPro" id="IPR020578">
    <property type="entry name" value="Aminotrans_V_PyrdxlP_BS"/>
</dbReference>
<dbReference type="InterPro" id="IPR010970">
    <property type="entry name" value="Cys_dSase_SufS"/>
</dbReference>
<dbReference type="InterPro" id="IPR015424">
    <property type="entry name" value="PyrdxlP-dep_Trfase"/>
</dbReference>
<dbReference type="InterPro" id="IPR015421">
    <property type="entry name" value="PyrdxlP-dep_Trfase_major"/>
</dbReference>
<dbReference type="InterPro" id="IPR015422">
    <property type="entry name" value="PyrdxlP-dep_Trfase_small"/>
</dbReference>
<dbReference type="NCBIfam" id="NF006791">
    <property type="entry name" value="PRK09295.1"/>
    <property type="match status" value="1"/>
</dbReference>
<dbReference type="NCBIfam" id="TIGR01979">
    <property type="entry name" value="sufS"/>
    <property type="match status" value="1"/>
</dbReference>
<dbReference type="PANTHER" id="PTHR43586">
    <property type="entry name" value="CYSTEINE DESULFURASE"/>
    <property type="match status" value="1"/>
</dbReference>
<dbReference type="PANTHER" id="PTHR43586:SF25">
    <property type="entry name" value="CYSTEINE DESULFURASE"/>
    <property type="match status" value="1"/>
</dbReference>
<dbReference type="Pfam" id="PF00266">
    <property type="entry name" value="Aminotran_5"/>
    <property type="match status" value="1"/>
</dbReference>
<dbReference type="SUPFAM" id="SSF53383">
    <property type="entry name" value="PLP-dependent transferases"/>
    <property type="match status" value="1"/>
</dbReference>
<dbReference type="PROSITE" id="PS00595">
    <property type="entry name" value="AA_TRANSFER_CLASS_5"/>
    <property type="match status" value="1"/>
</dbReference>
<reference key="1">
    <citation type="journal article" date="2009" name="J. Bacteriol.">
        <title>Genomic sequencing reveals regulatory mutations and recombinational events in the widely used MC4100 lineage of Escherichia coli K-12.</title>
        <authorList>
            <person name="Ferenci T."/>
            <person name="Zhou Z."/>
            <person name="Betteridge T."/>
            <person name="Ren Y."/>
            <person name="Liu Y."/>
            <person name="Feng L."/>
            <person name="Reeves P.R."/>
            <person name="Wang L."/>
        </authorList>
    </citation>
    <scope>NUCLEOTIDE SEQUENCE [LARGE SCALE GENOMIC DNA]</scope>
    <source>
        <strain>K12 / MC4100 / BW2952</strain>
    </source>
</reference>
<organism>
    <name type="scientific">Escherichia coli (strain K12 / MC4100 / BW2952)</name>
    <dbReference type="NCBI Taxonomy" id="595496"/>
    <lineage>
        <taxon>Bacteria</taxon>
        <taxon>Pseudomonadati</taxon>
        <taxon>Pseudomonadota</taxon>
        <taxon>Gammaproteobacteria</taxon>
        <taxon>Enterobacterales</taxon>
        <taxon>Enterobacteriaceae</taxon>
        <taxon>Escherichia</taxon>
    </lineage>
</organism>
<proteinExistence type="inferred from homology"/>
<sequence length="406" mass="44434">MIFSVDKVRADFPVLSREVNGLPLAYLDSAASAQKPSQVIDAEAEFYRHGYAAVHRGIHTLSAQATEKMENVRKRASLFINARSAEELVFVRGTTEGINLVANSWGNSNVRAGDNIIISQMEHHANIVPWQMLCARVGAELRVIPLNPDGTLQLETLPTLFDEKTRLLAITHVSNVLGTENPLAEMITLAHQHGAKVLVDGAQAVMHHPVDVQALDCDFYVFSGHKLYGPTGIGILYVKEALLQEMPPWEGGGSMIATVSLSEGTTWTKAPWRFEAGTPNTGGIIGLGAALEYVSALGLNNIAEYEQNLMHYALSQLESVPDLTLYGPQNRLGVIAFNLGKHHAYDVGSFLDNYGIAVRTGHHCAMPLMAYYNVPAMCRASLAMYNTHEEVDRLVTGLQRIHRLLG</sequence>
<comment type="function">
    <text evidence="1">Cysteine desulfurases mobilize the sulfur from L-cysteine to yield L-alanine, an essential step in sulfur metabolism for biosynthesis of a variety of sulfur-containing biomolecules. Component of the suf operon, which is activated and required under specific conditions such as oxidative stress and iron limitation. Acts as a potent selenocysteine lyase in vitro, that mobilizes selenium from L-selenocysteine. Selenocysteine lyase activity is however unsure in vivo.</text>
</comment>
<comment type="catalytic activity">
    <reaction evidence="1">
        <text>(sulfur carrier)-H + L-cysteine = (sulfur carrier)-SH + L-alanine</text>
        <dbReference type="Rhea" id="RHEA:43892"/>
        <dbReference type="Rhea" id="RHEA-COMP:14737"/>
        <dbReference type="Rhea" id="RHEA-COMP:14739"/>
        <dbReference type="ChEBI" id="CHEBI:29917"/>
        <dbReference type="ChEBI" id="CHEBI:35235"/>
        <dbReference type="ChEBI" id="CHEBI:57972"/>
        <dbReference type="ChEBI" id="CHEBI:64428"/>
        <dbReference type="EC" id="2.8.1.7"/>
    </reaction>
</comment>
<comment type="catalytic activity">
    <reaction evidence="1">
        <text>L-selenocysteine + AH2 = hydrogenselenide + L-alanine + A + H(+)</text>
        <dbReference type="Rhea" id="RHEA:11632"/>
        <dbReference type="ChEBI" id="CHEBI:13193"/>
        <dbReference type="ChEBI" id="CHEBI:15378"/>
        <dbReference type="ChEBI" id="CHEBI:17499"/>
        <dbReference type="ChEBI" id="CHEBI:29317"/>
        <dbReference type="ChEBI" id="CHEBI:57843"/>
        <dbReference type="ChEBI" id="CHEBI:57972"/>
        <dbReference type="EC" id="4.4.1.16"/>
    </reaction>
</comment>
<comment type="cofactor">
    <cofactor evidence="1">
        <name>pyridoxal 5'-phosphate</name>
        <dbReference type="ChEBI" id="CHEBI:597326"/>
    </cofactor>
</comment>
<comment type="pathway">
    <text evidence="1">Cofactor biosynthesis; iron-sulfur cluster biosynthesis.</text>
</comment>
<comment type="subunit">
    <text evidence="1">Homodimer. Interacts with SufE and the SufBCD complex composed of SufB, SufC and SufD. The interaction with SufE is required to mediate the direct transfer of the sulfur atom from the S-sulfanylcysteine.</text>
</comment>
<comment type="subcellular location">
    <subcellularLocation>
        <location evidence="1">Cytoplasm</location>
    </subcellularLocation>
</comment>
<comment type="similarity">
    <text evidence="1">Belongs to the class-V pyridoxal-phosphate-dependent aminotransferase family. Csd subfamily.</text>
</comment>
<feature type="chain" id="PRO_1000216075" description="Cysteine desulfurase">
    <location>
        <begin position="1"/>
        <end position="406"/>
    </location>
</feature>
<feature type="active site" description="Cysteine persulfide intermediate" evidence="1">
    <location>
        <position position="364"/>
    </location>
</feature>
<feature type="modified residue" description="N6-(pyridoxal phosphate)lysine" evidence="1">
    <location>
        <position position="226"/>
    </location>
</feature>
<evidence type="ECO:0000255" key="1">
    <source>
        <dbReference type="HAMAP-Rule" id="MF_01831"/>
    </source>
</evidence>
<accession>C4ZYE2</accession>
<name>SUFS_ECOBW</name>
<gene>
    <name evidence="1" type="primary">sufS</name>
    <name type="ordered locus">BWG_1494</name>
</gene>